<evidence type="ECO:0000250" key="1"/>
<evidence type="ECO:0000255" key="2"/>
<evidence type="ECO:0000255" key="3">
    <source>
        <dbReference type="PROSITE-ProRule" id="PRU01258"/>
    </source>
</evidence>
<evidence type="ECO:0000305" key="4"/>
<proteinExistence type="evidence at transcript level"/>
<accession>A0JPQ9</accession>
<feature type="signal peptide" evidence="2">
    <location>
        <begin position="1"/>
        <end position="19"/>
    </location>
</feature>
<feature type="chain" id="PRO_0000280611" description="Chitinase domain-containing protein 1">
    <location>
        <begin position="20"/>
        <end position="393"/>
    </location>
</feature>
<feature type="domain" description="GH18" evidence="3">
    <location>
        <begin position="79"/>
        <end position="393"/>
    </location>
</feature>
<comment type="function">
    <text evidence="1">Saccharide- and LPS-binding protein with possible roles in pathogen sensing and endotoxin neutralization. Ligand-binding specificity relates to the length of the oligosaccharides, with preference for chitotetraose (in vitro) (By similarity).</text>
</comment>
<comment type="subunit">
    <text evidence="1">Interacts with STAB1.</text>
</comment>
<comment type="subcellular location">
    <subcellularLocation>
        <location>Secreted</location>
    </subcellularLocation>
    <subcellularLocation>
        <location evidence="1">Lysosome</location>
    </subcellularLocation>
</comment>
<comment type="similarity">
    <text evidence="4">Belongs to the glycosyl hydrolase 18 family.</text>
</comment>
<comment type="sequence caution" evidence="4">
    <conflict type="erroneous initiation">
        <sequence resource="EMBL-CDS" id="AAI27547"/>
    </conflict>
</comment>
<reference key="1">
    <citation type="journal article" date="2004" name="Genome Res.">
        <title>The status, quality, and expansion of the NIH full-length cDNA project: the Mammalian Gene Collection (MGC).</title>
        <authorList>
            <consortium name="The MGC Project Team"/>
        </authorList>
    </citation>
    <scope>NUCLEOTIDE SEQUENCE [LARGE SCALE MRNA]</scope>
    <source>
        <tissue>Liver</tissue>
    </source>
</reference>
<protein>
    <recommendedName>
        <fullName>Chitinase domain-containing protein 1</fullName>
    </recommendedName>
</protein>
<organism>
    <name type="scientific">Rattus norvegicus</name>
    <name type="common">Rat</name>
    <dbReference type="NCBI Taxonomy" id="10116"/>
    <lineage>
        <taxon>Eukaryota</taxon>
        <taxon>Metazoa</taxon>
        <taxon>Chordata</taxon>
        <taxon>Craniata</taxon>
        <taxon>Vertebrata</taxon>
        <taxon>Euteleostomi</taxon>
        <taxon>Mammalia</taxon>
        <taxon>Eutheria</taxon>
        <taxon>Euarchontoglires</taxon>
        <taxon>Glires</taxon>
        <taxon>Rodentia</taxon>
        <taxon>Myomorpha</taxon>
        <taxon>Muroidea</taxon>
        <taxon>Muridae</taxon>
        <taxon>Murinae</taxon>
        <taxon>Rattus</taxon>
    </lineage>
</organism>
<sequence length="393" mass="44875">MWPLLHVLWLALVCGSVHTTLSKSDAKKAASKTLLEKTQFSDKPVQDRGLVVTDIKAEDVVLEHRSYCSARARERNFAGEVLGYVTPWNSHGYDVAKVFGSKFTQISPVWLQLKRRGREMFEITGLHDVDQGWMRAVKKHAKGVRIVPRLLFEDWTYDDFRSVLDSEDEIEELSKTVVQVAKNQHFDGFVVEVWSQLLSQKHVGLIHMLTHLAEALHQARLLVILVIPPAVTPGTDQLGMFTHKEFEQLAPILDGFSLMTYDYSTSQQPGPNAPLSWIRACVQVLDPKSQWRSKILLGLNFYGMDYAASKDAREPVIGARYIQTLKDHRPRVVWDSQAAEHFFEYKKNRGGRHVVFYPTLKSLQVRLELARELGVGVSIWELGQGLDYFYDLL</sequence>
<keyword id="KW-0391">Immunity</keyword>
<keyword id="KW-0399">Innate immunity</keyword>
<keyword id="KW-0458">Lysosome</keyword>
<keyword id="KW-1185">Reference proteome</keyword>
<keyword id="KW-0964">Secreted</keyword>
<keyword id="KW-0732">Signal</keyword>
<dbReference type="EMBL" id="BC127546">
    <property type="protein sequence ID" value="AAI27547.1"/>
    <property type="status" value="ALT_INIT"/>
    <property type="molecule type" value="mRNA"/>
</dbReference>
<dbReference type="RefSeq" id="NP_001041319.2">
    <property type="nucleotide sequence ID" value="NM_001047854.2"/>
</dbReference>
<dbReference type="RefSeq" id="XP_008758256.1">
    <property type="nucleotide sequence ID" value="XM_008760034.2"/>
</dbReference>
<dbReference type="RefSeq" id="XP_008758257.1">
    <property type="nucleotide sequence ID" value="XM_008760035.2"/>
</dbReference>
<dbReference type="RefSeq" id="XP_017459701.1">
    <property type="nucleotide sequence ID" value="XM_017604212.1"/>
</dbReference>
<dbReference type="RefSeq" id="XP_017459702.1">
    <property type="nucleotide sequence ID" value="XM_017604213.1"/>
</dbReference>
<dbReference type="SMR" id="A0JPQ9"/>
<dbReference type="FunCoup" id="A0JPQ9">
    <property type="interactions" value="1125"/>
</dbReference>
<dbReference type="GlyGen" id="A0JPQ9">
    <property type="glycosylation" value="1 site"/>
</dbReference>
<dbReference type="PhosphoSitePlus" id="A0JPQ9"/>
<dbReference type="jPOST" id="A0JPQ9"/>
<dbReference type="PaxDb" id="10116-ENSRNOP00000026390"/>
<dbReference type="PeptideAtlas" id="A0JPQ9"/>
<dbReference type="GeneID" id="293628"/>
<dbReference type="KEGG" id="rno:293628"/>
<dbReference type="UCSC" id="RGD:1308955">
    <property type="organism name" value="rat"/>
</dbReference>
<dbReference type="AGR" id="RGD:1308955"/>
<dbReference type="CTD" id="66005"/>
<dbReference type="RGD" id="1308955">
    <property type="gene designation" value="Chid1"/>
</dbReference>
<dbReference type="eggNOG" id="KOG2091">
    <property type="taxonomic scope" value="Eukaryota"/>
</dbReference>
<dbReference type="InParanoid" id="A0JPQ9"/>
<dbReference type="Reactome" id="R-RNO-114608">
    <property type="pathway name" value="Platelet degranulation"/>
</dbReference>
<dbReference type="PRO" id="PR:A0JPQ9"/>
<dbReference type="Proteomes" id="UP000002494">
    <property type="component" value="Unplaced"/>
</dbReference>
<dbReference type="GO" id="GO:0012505">
    <property type="term" value="C:endomembrane system"/>
    <property type="evidence" value="ECO:0000318"/>
    <property type="project" value="GO_Central"/>
</dbReference>
<dbReference type="GO" id="GO:0005615">
    <property type="term" value="C:extracellular space"/>
    <property type="evidence" value="ECO:0000266"/>
    <property type="project" value="RGD"/>
</dbReference>
<dbReference type="GO" id="GO:0005770">
    <property type="term" value="C:late endosome"/>
    <property type="evidence" value="ECO:0000266"/>
    <property type="project" value="RGD"/>
</dbReference>
<dbReference type="GO" id="GO:0005764">
    <property type="term" value="C:lysosome"/>
    <property type="evidence" value="ECO:0000266"/>
    <property type="project" value="RGD"/>
</dbReference>
<dbReference type="GO" id="GO:0005802">
    <property type="term" value="C:trans-Golgi network"/>
    <property type="evidence" value="ECO:0000266"/>
    <property type="project" value="RGD"/>
</dbReference>
<dbReference type="GO" id="GO:0008061">
    <property type="term" value="F:chitin binding"/>
    <property type="evidence" value="ECO:0007669"/>
    <property type="project" value="InterPro"/>
</dbReference>
<dbReference type="GO" id="GO:0070492">
    <property type="term" value="F:oligosaccharide binding"/>
    <property type="evidence" value="ECO:0000266"/>
    <property type="project" value="RGD"/>
</dbReference>
<dbReference type="GO" id="GO:0005975">
    <property type="term" value="P:carbohydrate metabolic process"/>
    <property type="evidence" value="ECO:0007669"/>
    <property type="project" value="InterPro"/>
</dbReference>
<dbReference type="GO" id="GO:0045087">
    <property type="term" value="P:innate immune response"/>
    <property type="evidence" value="ECO:0007669"/>
    <property type="project" value="UniProtKB-KW"/>
</dbReference>
<dbReference type="GO" id="GO:1900016">
    <property type="term" value="P:negative regulation of cytokine production involved in inflammatory response"/>
    <property type="evidence" value="ECO:0000266"/>
    <property type="project" value="RGD"/>
</dbReference>
<dbReference type="CDD" id="cd02876">
    <property type="entry name" value="GH18_SI-CLP"/>
    <property type="match status" value="1"/>
</dbReference>
<dbReference type="FunFam" id="3.20.20.80:FF:000527">
    <property type="entry name" value="Chitinase domain containing 1"/>
    <property type="match status" value="1"/>
</dbReference>
<dbReference type="FunFam" id="1.10.8.360:FF:000001">
    <property type="entry name" value="Chitinase domain-containing protein 1"/>
    <property type="match status" value="1"/>
</dbReference>
<dbReference type="FunFam" id="3.10.50.10:FF:000002">
    <property type="entry name" value="Chitinase domain-containing protein 1"/>
    <property type="match status" value="1"/>
</dbReference>
<dbReference type="Gene3D" id="3.10.50.10">
    <property type="match status" value="1"/>
</dbReference>
<dbReference type="Gene3D" id="1.10.8.360">
    <property type="entry name" value="3,6-anhydro-alpha-l-galactosidase"/>
    <property type="match status" value="1"/>
</dbReference>
<dbReference type="Gene3D" id="3.20.20.80">
    <property type="entry name" value="Glycosidases"/>
    <property type="match status" value="1"/>
</dbReference>
<dbReference type="InterPro" id="IPR011583">
    <property type="entry name" value="Chitinase_II/V-like_cat"/>
</dbReference>
<dbReference type="InterPro" id="IPR029070">
    <property type="entry name" value="Chitinase_insertion_sf"/>
</dbReference>
<dbReference type="InterPro" id="IPR001223">
    <property type="entry name" value="Glyco_hydro18_cat"/>
</dbReference>
<dbReference type="InterPro" id="IPR017853">
    <property type="entry name" value="Glycoside_hydrolase_SF"/>
</dbReference>
<dbReference type="PANTHER" id="PTHR46066:SF2">
    <property type="entry name" value="CHITINASE DOMAIN-CONTAINING PROTEIN 1"/>
    <property type="match status" value="1"/>
</dbReference>
<dbReference type="PANTHER" id="PTHR46066">
    <property type="entry name" value="CHITINASE DOMAIN-CONTAINING PROTEIN 1 FAMILY MEMBER"/>
    <property type="match status" value="1"/>
</dbReference>
<dbReference type="Pfam" id="PF00704">
    <property type="entry name" value="Glyco_hydro_18"/>
    <property type="match status" value="1"/>
</dbReference>
<dbReference type="SMART" id="SM00636">
    <property type="entry name" value="Glyco_18"/>
    <property type="match status" value="1"/>
</dbReference>
<dbReference type="SUPFAM" id="SSF51445">
    <property type="entry name" value="(Trans)glycosidases"/>
    <property type="match status" value="1"/>
</dbReference>
<dbReference type="PROSITE" id="PS51910">
    <property type="entry name" value="GH18_2"/>
    <property type="match status" value="1"/>
</dbReference>
<name>CHID1_RAT</name>
<gene>
    <name type="primary">Chid1</name>
</gene>